<evidence type="ECO:0000255" key="1">
    <source>
        <dbReference type="HAMAP-Rule" id="MF_01543"/>
    </source>
</evidence>
<organism>
    <name type="scientific">Ruminiclostridium cellulolyticum (strain ATCC 35319 / DSM 5812 / JCM 6584 / H10)</name>
    <name type="common">Clostridium cellulolyticum</name>
    <dbReference type="NCBI Taxonomy" id="394503"/>
    <lineage>
        <taxon>Bacteria</taxon>
        <taxon>Bacillati</taxon>
        <taxon>Bacillota</taxon>
        <taxon>Clostridia</taxon>
        <taxon>Eubacteriales</taxon>
        <taxon>Oscillospiraceae</taxon>
        <taxon>Ruminiclostridium</taxon>
    </lineage>
</organism>
<accession>B8I3S9</accession>
<gene>
    <name evidence="1" type="primary">fhs</name>
    <name type="ordered locus">Ccel_0018</name>
</gene>
<protein>
    <recommendedName>
        <fullName evidence="1">Formate--tetrahydrofolate ligase</fullName>
        <ecNumber evidence="1">6.3.4.3</ecNumber>
    </recommendedName>
    <alternativeName>
        <fullName evidence="1">Formyltetrahydrofolate synthetase</fullName>
        <shortName evidence="1">FHS</shortName>
        <shortName evidence="1">FTHFS</shortName>
    </alternativeName>
</protein>
<name>FTHS_RUMCH</name>
<feature type="chain" id="PRO_1000185252" description="Formate--tetrahydrofolate ligase">
    <location>
        <begin position="1"/>
        <end position="556"/>
    </location>
</feature>
<feature type="binding site" evidence="1">
    <location>
        <begin position="65"/>
        <end position="72"/>
    </location>
    <ligand>
        <name>ATP</name>
        <dbReference type="ChEBI" id="CHEBI:30616"/>
    </ligand>
</feature>
<keyword id="KW-0067">ATP-binding</keyword>
<keyword id="KW-0436">Ligase</keyword>
<keyword id="KW-0547">Nucleotide-binding</keyword>
<keyword id="KW-0554">One-carbon metabolism</keyword>
<keyword id="KW-1185">Reference proteome</keyword>
<sequence>MQTDIQIAQRCKMHHIADIAKNLGIDTEDIEFYGNYKAKLSDKLWDKVKNKKDGKLVLVTAINPTPAGEGKTTTTVGLGQAMARIGKNAVIALREPSMGPVMGIKGGAAGGGYAQVVPMEDINLHFTGDMHAITAANNLLSAAIDNHLQQGNMLNIDSRQIVWKRCMDMNDRALRNVIVGLGGKINGVPREDGFNITVASEIMAILCLALDIKDLKKRLGRIIIGYTYEGKPVTAHDLKVDGAMTLLLKDAIKPNLVQTLEGTPALMHGGPFANIAHGCNSISATKLALKLSDYVITEAGFGADLGAEKFFDIKCRFAGFKPDAVVLVATIRALKYNGGVRKEDLKEENIDALSKGFANAEKHIENLKQFGVPVMVAINHFDTDTEAEIKLIQEKCSSLGVEVAFSDVFLKGGEGGIELAEKLVALTDSTVSNFAPIYDEKLPIKEKVQQIVSKIYGGRNVIYNAAAEKSIAKIEEMGLDRLPICMAKTQYSLSDNPALLGRPQDFDVTVKEVRISAGAGFLVVLTGDIMTMPGLPKVPAAERIDINESGVITGLF</sequence>
<dbReference type="EC" id="6.3.4.3" evidence="1"/>
<dbReference type="EMBL" id="CP001348">
    <property type="protein sequence ID" value="ACL74406.1"/>
    <property type="molecule type" value="Genomic_DNA"/>
</dbReference>
<dbReference type="RefSeq" id="WP_012634473.1">
    <property type="nucleotide sequence ID" value="NC_011898.1"/>
</dbReference>
<dbReference type="SMR" id="B8I3S9"/>
<dbReference type="STRING" id="394503.Ccel_0018"/>
<dbReference type="KEGG" id="cce:Ccel_0018"/>
<dbReference type="eggNOG" id="COG2759">
    <property type="taxonomic scope" value="Bacteria"/>
</dbReference>
<dbReference type="HOGENOM" id="CLU_003601_3_3_9"/>
<dbReference type="OrthoDB" id="9761733at2"/>
<dbReference type="UniPathway" id="UPA00193"/>
<dbReference type="Proteomes" id="UP000001349">
    <property type="component" value="Chromosome"/>
</dbReference>
<dbReference type="GO" id="GO:0005524">
    <property type="term" value="F:ATP binding"/>
    <property type="evidence" value="ECO:0007669"/>
    <property type="project" value="UniProtKB-UniRule"/>
</dbReference>
<dbReference type="GO" id="GO:0004329">
    <property type="term" value="F:formate-tetrahydrofolate ligase activity"/>
    <property type="evidence" value="ECO:0007669"/>
    <property type="project" value="UniProtKB-UniRule"/>
</dbReference>
<dbReference type="GO" id="GO:0035999">
    <property type="term" value="P:tetrahydrofolate interconversion"/>
    <property type="evidence" value="ECO:0007669"/>
    <property type="project" value="UniProtKB-UniRule"/>
</dbReference>
<dbReference type="CDD" id="cd00477">
    <property type="entry name" value="FTHFS"/>
    <property type="match status" value="1"/>
</dbReference>
<dbReference type="FunFam" id="3.30.1510.10:FF:000001">
    <property type="entry name" value="Formate--tetrahydrofolate ligase"/>
    <property type="match status" value="1"/>
</dbReference>
<dbReference type="FunFam" id="3.10.410.10:FF:000001">
    <property type="entry name" value="Putative formate--tetrahydrofolate ligase"/>
    <property type="match status" value="1"/>
</dbReference>
<dbReference type="Gene3D" id="3.30.1510.10">
    <property type="entry name" value="Domain 2, N(10)-formyltetrahydrofolate synthetase"/>
    <property type="match status" value="1"/>
</dbReference>
<dbReference type="Gene3D" id="3.10.410.10">
    <property type="entry name" value="Formyltetrahydrofolate synthetase, domain 3"/>
    <property type="match status" value="1"/>
</dbReference>
<dbReference type="Gene3D" id="3.40.50.300">
    <property type="entry name" value="P-loop containing nucleotide triphosphate hydrolases"/>
    <property type="match status" value="1"/>
</dbReference>
<dbReference type="HAMAP" id="MF_01543">
    <property type="entry name" value="FTHFS"/>
    <property type="match status" value="1"/>
</dbReference>
<dbReference type="InterPro" id="IPR000559">
    <property type="entry name" value="Formate_THF_ligase"/>
</dbReference>
<dbReference type="InterPro" id="IPR020628">
    <property type="entry name" value="Formate_THF_ligase_CS"/>
</dbReference>
<dbReference type="InterPro" id="IPR027417">
    <property type="entry name" value="P-loop_NTPase"/>
</dbReference>
<dbReference type="NCBIfam" id="NF010030">
    <property type="entry name" value="PRK13505.1"/>
    <property type="match status" value="1"/>
</dbReference>
<dbReference type="Pfam" id="PF01268">
    <property type="entry name" value="FTHFS"/>
    <property type="match status" value="1"/>
</dbReference>
<dbReference type="SUPFAM" id="SSF52540">
    <property type="entry name" value="P-loop containing nucleoside triphosphate hydrolases"/>
    <property type="match status" value="1"/>
</dbReference>
<dbReference type="PROSITE" id="PS00721">
    <property type="entry name" value="FTHFS_1"/>
    <property type="match status" value="1"/>
</dbReference>
<dbReference type="PROSITE" id="PS00722">
    <property type="entry name" value="FTHFS_2"/>
    <property type="match status" value="1"/>
</dbReference>
<comment type="catalytic activity">
    <reaction evidence="1">
        <text>(6S)-5,6,7,8-tetrahydrofolate + formate + ATP = (6R)-10-formyltetrahydrofolate + ADP + phosphate</text>
        <dbReference type="Rhea" id="RHEA:20221"/>
        <dbReference type="ChEBI" id="CHEBI:15740"/>
        <dbReference type="ChEBI" id="CHEBI:30616"/>
        <dbReference type="ChEBI" id="CHEBI:43474"/>
        <dbReference type="ChEBI" id="CHEBI:57453"/>
        <dbReference type="ChEBI" id="CHEBI:195366"/>
        <dbReference type="ChEBI" id="CHEBI:456216"/>
        <dbReference type="EC" id="6.3.4.3"/>
    </reaction>
</comment>
<comment type="pathway">
    <text evidence="1">One-carbon metabolism; tetrahydrofolate interconversion.</text>
</comment>
<comment type="similarity">
    <text evidence="1">Belongs to the formate--tetrahydrofolate ligase family.</text>
</comment>
<proteinExistence type="inferred from homology"/>
<reference key="1">
    <citation type="submission" date="2009-01" db="EMBL/GenBank/DDBJ databases">
        <title>Complete sequence of Clostridium cellulolyticum H10.</title>
        <authorList>
            <consortium name="US DOE Joint Genome Institute"/>
            <person name="Lucas S."/>
            <person name="Copeland A."/>
            <person name="Lapidus A."/>
            <person name="Glavina del Rio T."/>
            <person name="Dalin E."/>
            <person name="Tice H."/>
            <person name="Bruce D."/>
            <person name="Goodwin L."/>
            <person name="Pitluck S."/>
            <person name="Chertkov O."/>
            <person name="Saunders E."/>
            <person name="Brettin T."/>
            <person name="Detter J.C."/>
            <person name="Han C."/>
            <person name="Larimer F."/>
            <person name="Land M."/>
            <person name="Hauser L."/>
            <person name="Kyrpides N."/>
            <person name="Ivanova N."/>
            <person name="Zhou J."/>
            <person name="Richardson P."/>
        </authorList>
    </citation>
    <scope>NUCLEOTIDE SEQUENCE [LARGE SCALE GENOMIC DNA]</scope>
    <source>
        <strain>ATCC 35319 / DSM 5812 / JCM 6584 / H10</strain>
    </source>
</reference>